<keyword id="KW-0963">Cytoplasm</keyword>
<keyword id="KW-0507">mRNA processing</keyword>
<keyword id="KW-0508">mRNA splicing</keyword>
<keyword id="KW-0539">Nucleus</keyword>
<keyword id="KW-1185">Reference proteome</keyword>
<keyword id="KW-0747">Spliceosome</keyword>
<protein>
    <recommendedName>
        <fullName>Pre-mRNA-splicing factor CWC22</fullName>
    </recommendedName>
</protein>
<name>CWC22_MYCMD</name>
<accession>Q4PCY0</accession>
<accession>A0A0D1DZQ0</accession>
<sequence>MPSRERSPSSGLGFQSDSSRSSPPDAGVTAHKRKRSPTRSVSSRSTSSRSPSRSRSPPPRSRRRRRSSRDRSQSSNSDESTEERKNTTRAREALEQNAKTLEIAAKGEALRSTLAQLSATKSGGAYVPPARLKALMAEAAAADPGSVEYQRMSWDALKKSITGLVNKVAVENIKSIVPELFGGANLIRGRGLYCRSIMRAQALSLSFTPVFAALTAIVNTKLPMIGELLAVRLVSQFRRSFKRNDKAVCNSTAMFLAHLVNQRVVHEVLALEILVLLLEKPTDDSVEIAVGFMREVGAFLTEEAPKANNSIFDRFRAVLYEGEISKRVQYMIEVLSQVRREGFKENPRIPDALDLVEEDDQITHRISLDDQLNIEEGLNVFKMDPEFVENEERYRSIKAEILGENSDSDKTGSEADSESGSSSDDSSDDEAGEGPDDAQRQLEIHDRTETNLINLRRTIYLTIMSSLDFEESVHKLLKLEVPEGQDIELCNMIVECCSQERTYSKFYGNMGERFCKLHRKWADTFAQSFSNYYDTIHRYETNRLRNIARFFGHLFSTDSISWASMSVIHMNEEDTTSSSRIFVKIMFQEMQQQLGLKELAERFKEPSLQENWKGLFPTDNPKSTRFSINYFTSIGLGVLTEEMREYLKNAPKLLLAQRQAALAARGSDNSDSDSSSVLSSSTGSRSRTSYSSYSRSSRSYSSGSGSYSSRSRSSRSYSSRSYSSRSYSSRSRSRSRSRSRSRSRSRSRSRSRSRSRSPSEHQRHGRRRARSASYSSYSSRSRSSSSSSSRSRSRSRSRSRSFSRSLTPRGSYSRSCSRSPVPRRRAPRSRSRSADPRKRSSRRSPSVSSYSGSETDDSISRSPSPRAGYVDRRSHRHSRSASPARR</sequence>
<evidence type="ECO:0000250" key="1"/>
<evidence type="ECO:0000255" key="2">
    <source>
        <dbReference type="PROSITE-ProRule" id="PRU00698"/>
    </source>
</evidence>
<evidence type="ECO:0000256" key="3">
    <source>
        <dbReference type="SAM" id="MobiDB-lite"/>
    </source>
</evidence>
<evidence type="ECO:0000305" key="4"/>
<feature type="chain" id="PRO_0000215676" description="Pre-mRNA-splicing factor CWC22">
    <location>
        <begin position="1"/>
        <end position="886"/>
    </location>
</feature>
<feature type="domain" description="MIF4G" evidence="2">
    <location>
        <begin position="158"/>
        <end position="342"/>
    </location>
</feature>
<feature type="domain" description="MI" evidence="2">
    <location>
        <begin position="454"/>
        <end position="570"/>
    </location>
</feature>
<feature type="region of interest" description="Disordered" evidence="3">
    <location>
        <begin position="1"/>
        <end position="90"/>
    </location>
</feature>
<feature type="region of interest" description="Disordered" evidence="3">
    <location>
        <begin position="400"/>
        <end position="445"/>
    </location>
</feature>
<feature type="region of interest" description="Disordered" evidence="3">
    <location>
        <begin position="664"/>
        <end position="886"/>
    </location>
</feature>
<feature type="compositionally biased region" description="Polar residues" evidence="3">
    <location>
        <begin position="8"/>
        <end position="22"/>
    </location>
</feature>
<feature type="compositionally biased region" description="Low complexity" evidence="3">
    <location>
        <begin position="38"/>
        <end position="55"/>
    </location>
</feature>
<feature type="compositionally biased region" description="Acidic residues" evidence="3">
    <location>
        <begin position="425"/>
        <end position="436"/>
    </location>
</feature>
<feature type="compositionally biased region" description="Low complexity" evidence="3">
    <location>
        <begin position="672"/>
        <end position="730"/>
    </location>
</feature>
<feature type="compositionally biased region" description="Basic residues" evidence="3">
    <location>
        <begin position="731"/>
        <end position="755"/>
    </location>
</feature>
<feature type="compositionally biased region" description="Low complexity" evidence="3">
    <location>
        <begin position="771"/>
        <end position="790"/>
    </location>
</feature>
<feature type="compositionally biased region" description="Basic residues" evidence="3">
    <location>
        <begin position="791"/>
        <end position="801"/>
    </location>
</feature>
<feature type="compositionally biased region" description="Low complexity" evidence="3">
    <location>
        <begin position="802"/>
        <end position="820"/>
    </location>
</feature>
<feature type="compositionally biased region" description="Basic residues" evidence="3">
    <location>
        <begin position="821"/>
        <end position="831"/>
    </location>
</feature>
<feature type="compositionally biased region" description="Low complexity" evidence="3">
    <location>
        <begin position="843"/>
        <end position="853"/>
    </location>
</feature>
<feature type="compositionally biased region" description="Basic residues" evidence="3">
    <location>
        <begin position="873"/>
        <end position="886"/>
    </location>
</feature>
<reference key="1">
    <citation type="journal article" date="2006" name="Nature">
        <title>Insights from the genome of the biotrophic fungal plant pathogen Ustilago maydis.</title>
        <authorList>
            <person name="Kaemper J."/>
            <person name="Kahmann R."/>
            <person name="Boelker M."/>
            <person name="Ma L.-J."/>
            <person name="Brefort T."/>
            <person name="Saville B.J."/>
            <person name="Banuett F."/>
            <person name="Kronstad J.W."/>
            <person name="Gold S.E."/>
            <person name="Mueller O."/>
            <person name="Perlin M.H."/>
            <person name="Woesten H.A.B."/>
            <person name="de Vries R."/>
            <person name="Ruiz-Herrera J."/>
            <person name="Reynaga-Pena C.G."/>
            <person name="Snetselaar K."/>
            <person name="McCann M."/>
            <person name="Perez-Martin J."/>
            <person name="Feldbruegge M."/>
            <person name="Basse C.W."/>
            <person name="Steinberg G."/>
            <person name="Ibeas J.I."/>
            <person name="Holloman W."/>
            <person name="Guzman P."/>
            <person name="Farman M.L."/>
            <person name="Stajich J.E."/>
            <person name="Sentandreu R."/>
            <person name="Gonzalez-Prieto J.M."/>
            <person name="Kennell J.C."/>
            <person name="Molina L."/>
            <person name="Schirawski J."/>
            <person name="Mendoza-Mendoza A."/>
            <person name="Greilinger D."/>
            <person name="Muench K."/>
            <person name="Roessel N."/>
            <person name="Scherer M."/>
            <person name="Vranes M."/>
            <person name="Ladendorf O."/>
            <person name="Vincon V."/>
            <person name="Fuchs U."/>
            <person name="Sandrock B."/>
            <person name="Meng S."/>
            <person name="Ho E.C.H."/>
            <person name="Cahill M.J."/>
            <person name="Boyce K.J."/>
            <person name="Klose J."/>
            <person name="Klosterman S.J."/>
            <person name="Deelstra H.J."/>
            <person name="Ortiz-Castellanos L."/>
            <person name="Li W."/>
            <person name="Sanchez-Alonso P."/>
            <person name="Schreier P.H."/>
            <person name="Haeuser-Hahn I."/>
            <person name="Vaupel M."/>
            <person name="Koopmann E."/>
            <person name="Friedrich G."/>
            <person name="Voss H."/>
            <person name="Schlueter T."/>
            <person name="Margolis J."/>
            <person name="Platt D."/>
            <person name="Swimmer C."/>
            <person name="Gnirke A."/>
            <person name="Chen F."/>
            <person name="Vysotskaia V."/>
            <person name="Mannhaupt G."/>
            <person name="Gueldener U."/>
            <person name="Muensterkoetter M."/>
            <person name="Haase D."/>
            <person name="Oesterheld M."/>
            <person name="Mewes H.-W."/>
            <person name="Mauceli E.W."/>
            <person name="DeCaprio D."/>
            <person name="Wade C.M."/>
            <person name="Butler J."/>
            <person name="Young S.K."/>
            <person name="Jaffe D.B."/>
            <person name="Calvo S.E."/>
            <person name="Nusbaum C."/>
            <person name="Galagan J.E."/>
            <person name="Birren B.W."/>
        </authorList>
    </citation>
    <scope>NUCLEOTIDE SEQUENCE [LARGE SCALE GENOMIC DNA]</scope>
    <source>
        <strain>DSM 14603 / FGSC 9021 / UM521</strain>
    </source>
</reference>
<reference key="2">
    <citation type="submission" date="2014-09" db="EMBL/GenBank/DDBJ databases">
        <authorList>
            <person name="Gueldener U."/>
            <person name="Muensterkoetter M."/>
            <person name="Walter M.C."/>
            <person name="Mannhaupt G."/>
            <person name="Kahmann R."/>
        </authorList>
    </citation>
    <scope>GENOME REANNOTATION</scope>
    <source>
        <strain>DSM 14603 / FGSC 9021 / UM521</strain>
    </source>
</reference>
<gene>
    <name type="primary">CWC22</name>
    <name type="ORF">UMAG_11905</name>
</gene>
<dbReference type="EMBL" id="CM003144">
    <property type="protein sequence ID" value="KIS69494.1"/>
    <property type="molecule type" value="Genomic_DNA"/>
</dbReference>
<dbReference type="RefSeq" id="XP_011388885.1">
    <property type="nucleotide sequence ID" value="XM_011390583.1"/>
</dbReference>
<dbReference type="SMR" id="Q4PCY0"/>
<dbReference type="FunCoup" id="Q4PCY0">
    <property type="interactions" value="737"/>
</dbReference>
<dbReference type="STRING" id="237631.Q4PCY0"/>
<dbReference type="EnsemblFungi" id="KIS69494">
    <property type="protein sequence ID" value="KIS69494"/>
    <property type="gene ID" value="UMAG_11905"/>
</dbReference>
<dbReference type="GeneID" id="23567716"/>
<dbReference type="KEGG" id="uma:UMAG_11905"/>
<dbReference type="VEuPathDB" id="FungiDB:UMAG_11905"/>
<dbReference type="eggNOG" id="KOG2140">
    <property type="taxonomic scope" value="Eukaryota"/>
</dbReference>
<dbReference type="HOGENOM" id="CLU_006308_3_2_1"/>
<dbReference type="InParanoid" id="Q4PCY0"/>
<dbReference type="OrthoDB" id="1924287at2759"/>
<dbReference type="Proteomes" id="UP000000561">
    <property type="component" value="Chromosome 5"/>
</dbReference>
<dbReference type="GO" id="GO:0071013">
    <property type="term" value="C:catalytic step 2 spliceosome"/>
    <property type="evidence" value="ECO:0000318"/>
    <property type="project" value="GO_Central"/>
</dbReference>
<dbReference type="GO" id="GO:0005737">
    <property type="term" value="C:cytoplasm"/>
    <property type="evidence" value="ECO:0007669"/>
    <property type="project" value="UniProtKB-SubCell"/>
</dbReference>
<dbReference type="GO" id="GO:0003723">
    <property type="term" value="F:RNA binding"/>
    <property type="evidence" value="ECO:0000318"/>
    <property type="project" value="GO_Central"/>
</dbReference>
<dbReference type="GO" id="GO:0000398">
    <property type="term" value="P:mRNA splicing, via spliceosome"/>
    <property type="evidence" value="ECO:0000318"/>
    <property type="project" value="GO_Central"/>
</dbReference>
<dbReference type="FunFam" id="1.25.40.180:FF:000004">
    <property type="entry name" value="pre-mRNA-splicing factor CWC22 homolog"/>
    <property type="match status" value="1"/>
</dbReference>
<dbReference type="Gene3D" id="1.25.40.180">
    <property type="match status" value="1"/>
</dbReference>
<dbReference type="InterPro" id="IPR016024">
    <property type="entry name" value="ARM-type_fold"/>
</dbReference>
<dbReference type="InterPro" id="IPR050781">
    <property type="entry name" value="CWC22_splicing_factor"/>
</dbReference>
<dbReference type="InterPro" id="IPR003891">
    <property type="entry name" value="Initiation_fac_eIF4g_MI"/>
</dbReference>
<dbReference type="InterPro" id="IPR003890">
    <property type="entry name" value="MIF4G-like_typ-3"/>
</dbReference>
<dbReference type="PANTHER" id="PTHR18034">
    <property type="entry name" value="CELL CYCLE CONTROL PROTEIN CWF22-RELATED"/>
    <property type="match status" value="1"/>
</dbReference>
<dbReference type="PANTHER" id="PTHR18034:SF3">
    <property type="entry name" value="PRE-MRNA-SPLICING FACTOR CWC22 HOMOLOG"/>
    <property type="match status" value="1"/>
</dbReference>
<dbReference type="Pfam" id="PF02847">
    <property type="entry name" value="MA3"/>
    <property type="match status" value="1"/>
</dbReference>
<dbReference type="Pfam" id="PF02854">
    <property type="entry name" value="MIF4G"/>
    <property type="match status" value="1"/>
</dbReference>
<dbReference type="SMART" id="SM00544">
    <property type="entry name" value="MA3"/>
    <property type="match status" value="1"/>
</dbReference>
<dbReference type="SMART" id="SM00543">
    <property type="entry name" value="MIF4G"/>
    <property type="match status" value="1"/>
</dbReference>
<dbReference type="SUPFAM" id="SSF48371">
    <property type="entry name" value="ARM repeat"/>
    <property type="match status" value="1"/>
</dbReference>
<dbReference type="PROSITE" id="PS51366">
    <property type="entry name" value="MI"/>
    <property type="match status" value="1"/>
</dbReference>
<proteinExistence type="inferred from homology"/>
<organism>
    <name type="scientific">Mycosarcoma maydis</name>
    <name type="common">Corn smut fungus</name>
    <name type="synonym">Ustilago maydis</name>
    <dbReference type="NCBI Taxonomy" id="5270"/>
    <lineage>
        <taxon>Eukaryota</taxon>
        <taxon>Fungi</taxon>
        <taxon>Dikarya</taxon>
        <taxon>Basidiomycota</taxon>
        <taxon>Ustilaginomycotina</taxon>
        <taxon>Ustilaginomycetes</taxon>
        <taxon>Ustilaginales</taxon>
        <taxon>Ustilaginaceae</taxon>
        <taxon>Mycosarcoma</taxon>
    </lineage>
</organism>
<comment type="function">
    <text evidence="1">Involved in pre-mRNA splicing.</text>
</comment>
<comment type="subunit">
    <text evidence="1">Associated with the spliceosome.</text>
</comment>
<comment type="subcellular location">
    <subcellularLocation>
        <location evidence="1">Cytoplasm</location>
    </subcellularLocation>
    <subcellularLocation>
        <location evidence="1">Nucleus</location>
    </subcellularLocation>
</comment>
<comment type="similarity">
    <text evidence="4">Belongs to the CWC22 family.</text>
</comment>